<name>NDUA9_SOLTU</name>
<dbReference type="PIR" id="B49732">
    <property type="entry name" value="B49732"/>
</dbReference>
<dbReference type="InParanoid" id="P80265"/>
<dbReference type="Proteomes" id="UP000011115">
    <property type="component" value="Unassembled WGS sequence"/>
</dbReference>
<dbReference type="GO" id="GO:0005759">
    <property type="term" value="C:mitochondrial matrix"/>
    <property type="evidence" value="ECO:0007669"/>
    <property type="project" value="UniProtKB-SubCell"/>
</dbReference>
<feature type="chain" id="PRO_0000118630" description="NADH dehydrogenase [ubiquinone] 1 alpha subcomplex subunit 9">
    <location>
        <begin position="1"/>
        <end position="22" status="greater than"/>
    </location>
</feature>
<feature type="region of interest" description="Disordered" evidence="2">
    <location>
        <begin position="1"/>
        <end position="22"/>
    </location>
</feature>
<feature type="non-terminal residue">
    <location>
        <position position="22"/>
    </location>
</feature>
<reference key="1">
    <citation type="journal article" date="1994" name="J. Biol. Chem.">
        <title>Purification of the NADH:ubiquinone oxidoreductase (complex I) of the respiratory chain from the inner mitochondrial membrane of Solanum tuberosum.</title>
        <authorList>
            <person name="Herz U."/>
            <person name="Schroeder W."/>
            <person name="Liddell A."/>
            <person name="Leaver C.J."/>
            <person name="Brennicke A."/>
            <person name="Grohmann L."/>
        </authorList>
    </citation>
    <scope>PROTEIN SEQUENCE</scope>
    <source>
        <strain>cv. Bintje</strain>
        <tissue>Tuber</tissue>
    </source>
</reference>
<evidence type="ECO:0000250" key="1"/>
<evidence type="ECO:0000256" key="2">
    <source>
        <dbReference type="SAM" id="MobiDB-lite"/>
    </source>
</evidence>
<evidence type="ECO:0000305" key="3"/>
<keyword id="KW-0903">Direct protein sequencing</keyword>
<keyword id="KW-0249">Electron transport</keyword>
<keyword id="KW-0274">FAD</keyword>
<keyword id="KW-0285">Flavoprotein</keyword>
<keyword id="KW-0496">Mitochondrion</keyword>
<keyword id="KW-1185">Reference proteome</keyword>
<keyword id="KW-0679">Respiratory chain</keyword>
<keyword id="KW-0813">Transport</keyword>
<proteinExistence type="evidence at protein level"/>
<sequence length="22" mass="1983">ASNLATGGAGPLIXKGTGGRSS</sequence>
<protein>
    <recommendedName>
        <fullName>NADH dehydrogenase [ubiquinone] 1 alpha subcomplex subunit 9</fullName>
    </recommendedName>
    <alternativeName>
        <fullName>Complex I-38.5kD</fullName>
        <shortName>CI-38.5kD</shortName>
    </alternativeName>
    <alternativeName>
        <fullName>NADH-ubiquinone oxidoreductase 38.5 kDa subunit</fullName>
    </alternativeName>
</protein>
<comment type="function">
    <text>Accessory subunit of the mitochondrial membrane respiratory chain NADH dehydrogenase (Complex I), that is believed not to be involved in catalysis. Complex I functions in the transfer of electrons from NADH to the respiratory chain. The immediate electron acceptor for the enzyme is believed to be ubiquinone.</text>
</comment>
<comment type="cofactor">
    <cofactor evidence="1">
        <name>FAD</name>
        <dbReference type="ChEBI" id="CHEBI:57692"/>
    </cofactor>
    <text evidence="1">Binds 1 FAD per subunit.</text>
</comment>
<comment type="subunit">
    <text evidence="1">Complex I is composed of about 45 different subunits.</text>
</comment>
<comment type="subcellular location">
    <subcellularLocation>
        <location>Mitochondrion matrix</location>
    </subcellularLocation>
</comment>
<comment type="similarity">
    <text evidence="3">Belongs to the complex I NDUFA9 subunit family.</text>
</comment>
<organism>
    <name type="scientific">Solanum tuberosum</name>
    <name type="common">Potato</name>
    <dbReference type="NCBI Taxonomy" id="4113"/>
    <lineage>
        <taxon>Eukaryota</taxon>
        <taxon>Viridiplantae</taxon>
        <taxon>Streptophyta</taxon>
        <taxon>Embryophyta</taxon>
        <taxon>Tracheophyta</taxon>
        <taxon>Spermatophyta</taxon>
        <taxon>Magnoliopsida</taxon>
        <taxon>eudicotyledons</taxon>
        <taxon>Gunneridae</taxon>
        <taxon>Pentapetalae</taxon>
        <taxon>asterids</taxon>
        <taxon>lamiids</taxon>
        <taxon>Solanales</taxon>
        <taxon>Solanaceae</taxon>
        <taxon>Solanoideae</taxon>
        <taxon>Solaneae</taxon>
        <taxon>Solanum</taxon>
    </lineage>
</organism>
<accession>P80265</accession>